<evidence type="ECO:0000250" key="1"/>
<evidence type="ECO:0000255" key="2">
    <source>
        <dbReference type="HAMAP-Rule" id="MF_00403"/>
    </source>
</evidence>
<evidence type="ECO:0000305" key="3"/>
<protein>
    <recommendedName>
        <fullName evidence="2">Small ribosomal subunit protein uS12cz/uS12cy</fullName>
    </recommendedName>
    <alternativeName>
        <fullName evidence="3">30S ribosomal protein S12, chloroplastic</fullName>
    </alternativeName>
</protein>
<keyword id="KW-0150">Chloroplast</keyword>
<keyword id="KW-0934">Plastid</keyword>
<keyword id="KW-0687">Ribonucleoprotein</keyword>
<keyword id="KW-0689">Ribosomal protein</keyword>
<keyword id="KW-0694">RNA-binding</keyword>
<keyword id="KW-0699">rRNA-binding</keyword>
<name>RR12_AETCO</name>
<feature type="chain" id="PRO_0000296059" description="Small ribosomal subunit protein uS12cz/uS12cy">
    <location>
        <begin position="1"/>
        <end position="123"/>
    </location>
</feature>
<accession>A4QJD9</accession>
<reference key="1">
    <citation type="submission" date="2007-03" db="EMBL/GenBank/DDBJ databases">
        <title>Sequencing analysis of Aethionema coridifolium chloroplast DNA.</title>
        <authorList>
            <person name="Hosouchi T."/>
            <person name="Tsuruoka H."/>
            <person name="Kotani H."/>
        </authorList>
    </citation>
    <scope>NUCLEOTIDE SEQUENCE [LARGE SCALE GENOMIC DNA]</scope>
</reference>
<proteinExistence type="inferred from homology"/>
<gene>
    <name type="primary">rps12-A</name>
</gene>
<gene>
    <name type="primary">rps12-B</name>
</gene>
<comment type="function">
    <text evidence="1">With S4 and S5 plays an important role in translational accuracy. Located at the interface of the 30S and 50S subunits (By similarity).</text>
</comment>
<comment type="subunit">
    <text evidence="1">Part of the 30S ribosomal subunit.</text>
</comment>
<comment type="subcellular location">
    <subcellularLocation>
        <location>Plastid</location>
        <location>Chloroplast</location>
    </subcellularLocation>
</comment>
<comment type="similarity">
    <text evidence="3">Belongs to the universal ribosomal protein uS12 family.</text>
</comment>
<geneLocation type="chloroplast"/>
<sequence>MPTIKQLIRNTRQPIRNVTKSPALRGCPQRRGTCTRVYTITPKKPNSALRKVARVRLTSGFEITAYIPGIGHNLQEHSVVLVRGGRVKDLPGVRYHIVRGTLDAVGVKDRQQGRSKYGVKKPK</sequence>
<dbReference type="EMBL" id="AP009366">
    <property type="protein sequence ID" value="BAF49794.1"/>
    <property type="molecule type" value="Genomic_DNA"/>
</dbReference>
<dbReference type="EMBL" id="AP009366">
    <property type="protein sequence ID" value="BAF49816.1"/>
    <property type="molecule type" value="Genomic_DNA"/>
</dbReference>
<dbReference type="SMR" id="A4QJD9"/>
<dbReference type="GO" id="GO:0009507">
    <property type="term" value="C:chloroplast"/>
    <property type="evidence" value="ECO:0007669"/>
    <property type="project" value="UniProtKB-SubCell"/>
</dbReference>
<dbReference type="GO" id="GO:0015935">
    <property type="term" value="C:small ribosomal subunit"/>
    <property type="evidence" value="ECO:0007669"/>
    <property type="project" value="InterPro"/>
</dbReference>
<dbReference type="GO" id="GO:0019843">
    <property type="term" value="F:rRNA binding"/>
    <property type="evidence" value="ECO:0007669"/>
    <property type="project" value="UniProtKB-UniRule"/>
</dbReference>
<dbReference type="GO" id="GO:0003735">
    <property type="term" value="F:structural constituent of ribosome"/>
    <property type="evidence" value="ECO:0007669"/>
    <property type="project" value="InterPro"/>
</dbReference>
<dbReference type="GO" id="GO:0006412">
    <property type="term" value="P:translation"/>
    <property type="evidence" value="ECO:0007669"/>
    <property type="project" value="UniProtKB-UniRule"/>
</dbReference>
<dbReference type="CDD" id="cd03368">
    <property type="entry name" value="Ribosomal_S12"/>
    <property type="match status" value="1"/>
</dbReference>
<dbReference type="FunFam" id="2.40.50.140:FF:000008">
    <property type="entry name" value="30S ribosomal protein S12, chloroplastic"/>
    <property type="match status" value="1"/>
</dbReference>
<dbReference type="Gene3D" id="2.40.50.140">
    <property type="entry name" value="Nucleic acid-binding proteins"/>
    <property type="match status" value="1"/>
</dbReference>
<dbReference type="HAMAP" id="MF_00403_B">
    <property type="entry name" value="Ribosomal_uS12_B"/>
    <property type="match status" value="1"/>
</dbReference>
<dbReference type="InterPro" id="IPR012340">
    <property type="entry name" value="NA-bd_OB-fold"/>
</dbReference>
<dbReference type="InterPro" id="IPR006032">
    <property type="entry name" value="Ribosomal_uS12"/>
</dbReference>
<dbReference type="InterPro" id="IPR005679">
    <property type="entry name" value="Ribosomal_uS12_bac"/>
</dbReference>
<dbReference type="NCBIfam" id="TIGR00981">
    <property type="entry name" value="rpsL_bact"/>
    <property type="match status" value="1"/>
</dbReference>
<dbReference type="PANTHER" id="PTHR11652">
    <property type="entry name" value="30S RIBOSOMAL PROTEIN S12 FAMILY MEMBER"/>
    <property type="match status" value="1"/>
</dbReference>
<dbReference type="Pfam" id="PF00164">
    <property type="entry name" value="Ribosom_S12_S23"/>
    <property type="match status" value="1"/>
</dbReference>
<dbReference type="PIRSF" id="PIRSF002133">
    <property type="entry name" value="Ribosomal_S12/S23"/>
    <property type="match status" value="1"/>
</dbReference>
<dbReference type="PRINTS" id="PR01034">
    <property type="entry name" value="RIBOSOMALS12"/>
</dbReference>
<dbReference type="SUPFAM" id="SSF50249">
    <property type="entry name" value="Nucleic acid-binding proteins"/>
    <property type="match status" value="1"/>
</dbReference>
<dbReference type="PROSITE" id="PS00055">
    <property type="entry name" value="RIBOSOMAL_S12"/>
    <property type="match status" value="1"/>
</dbReference>
<organism>
    <name type="scientific">Aethionema cordifolium</name>
    <name type="common">Lebanon stonecress</name>
    <dbReference type="NCBI Taxonomy" id="434059"/>
    <lineage>
        <taxon>Eukaryota</taxon>
        <taxon>Viridiplantae</taxon>
        <taxon>Streptophyta</taxon>
        <taxon>Embryophyta</taxon>
        <taxon>Tracheophyta</taxon>
        <taxon>Spermatophyta</taxon>
        <taxon>Magnoliopsida</taxon>
        <taxon>eudicotyledons</taxon>
        <taxon>Gunneridae</taxon>
        <taxon>Pentapetalae</taxon>
        <taxon>rosids</taxon>
        <taxon>malvids</taxon>
        <taxon>Brassicales</taxon>
        <taxon>Brassicaceae</taxon>
        <taxon>Aethionemeae</taxon>
        <taxon>Aethionema</taxon>
    </lineage>
</organism>